<reference key="1">
    <citation type="journal article" date="2009" name="Nat. Biotechnol.">
        <title>Genome sequence of the recombinant protein production host Pichia pastoris.</title>
        <authorList>
            <person name="De Schutter K."/>
            <person name="Lin Y.-C."/>
            <person name="Tiels P."/>
            <person name="Van Hecke A."/>
            <person name="Glinka S."/>
            <person name="Weber-Lehmann J."/>
            <person name="Rouze P."/>
            <person name="Van de Peer Y."/>
            <person name="Callewaert N."/>
        </authorList>
    </citation>
    <scope>NUCLEOTIDE SEQUENCE [LARGE SCALE GENOMIC DNA]</scope>
    <source>
        <strain>GS115 / ATCC 20864</strain>
    </source>
</reference>
<organism>
    <name type="scientific">Komagataella phaffii (strain GS115 / ATCC 20864)</name>
    <name type="common">Yeast</name>
    <name type="synonym">Pichia pastoris</name>
    <dbReference type="NCBI Taxonomy" id="644223"/>
    <lineage>
        <taxon>Eukaryota</taxon>
        <taxon>Fungi</taxon>
        <taxon>Dikarya</taxon>
        <taxon>Ascomycota</taxon>
        <taxon>Saccharomycotina</taxon>
        <taxon>Pichiomycetes</taxon>
        <taxon>Pichiales</taxon>
        <taxon>Pichiaceae</taxon>
        <taxon>Komagataella</taxon>
    </lineage>
</organism>
<comment type="function">
    <text evidence="1">Component of the ASTRA complex involved in chromatin remodeling.</text>
</comment>
<comment type="subunit">
    <text evidence="1">Component of the ASTRA chromatin remodeling machinery complex.</text>
</comment>
<comment type="subcellular location">
    <subcellularLocation>
        <location evidence="1">Nucleus</location>
    </subcellularLocation>
</comment>
<comment type="similarity">
    <text evidence="2">Belongs to the WD repeat ASA1 family.</text>
</comment>
<gene>
    <name type="primary">ASA1</name>
    <name type="ordered locus">PAS_chr4_0875</name>
</gene>
<protein>
    <recommendedName>
        <fullName>ASTRA-associated protein 1</fullName>
    </recommendedName>
</protein>
<accession>C4R970</accession>
<proteinExistence type="inferred from homology"/>
<feature type="chain" id="PRO_0000402218" description="ASTRA-associated protein 1">
    <location>
        <begin position="1"/>
        <end position="434"/>
    </location>
</feature>
<feature type="repeat" description="WD 1">
    <location>
        <begin position="17"/>
        <end position="68"/>
    </location>
</feature>
<feature type="repeat" description="WD 2">
    <location>
        <begin position="74"/>
        <end position="123"/>
    </location>
</feature>
<sequence>MHTHTSHGIESDAMLRFHKSPVSALEPFYLPSPFVVNGEPLLLASLVSADENGWVVWWDLGTKRPLGTWRAHESTIVTVQQMGIHWDADVPQLHRNTFGKLLTHGRDNCVRIWDLFRVSSFSSMDWNLCKVLHKTRDTARNPDVYEIPVNALNFCNVATRAEMIATPASLSSESFDIYVVSNHRLERLHSNVDICQILQQNQRSNETDENRKFGAIMQITWTGDFQLAVGYESGIVACIQLQERHTQVVWIDSSHLTHPILGIVSNLDRVFTCSASDRIVVNSLQTGKTVAISKIKHKGISSLDVTINNSICLVSVTTWDGFSRIYRYDEDSSAAVDEALKGVFIPWTKLRRIPPKVIPNFKSSSNHQTIDLPDLKGRVIKLSKTQNGCNNALVERSDGQSKMILRSSEKRALTRYAFVGYQDGRVATYILCDS</sequence>
<keyword id="KW-0156">Chromatin regulator</keyword>
<keyword id="KW-0539">Nucleus</keyword>
<keyword id="KW-1185">Reference proteome</keyword>
<keyword id="KW-0677">Repeat</keyword>
<keyword id="KW-0853">WD repeat</keyword>
<dbReference type="EMBL" id="FN392322">
    <property type="protein sequence ID" value="CAY72145.1"/>
    <property type="molecule type" value="Genomic_DNA"/>
</dbReference>
<dbReference type="RefSeq" id="XP_002494324.1">
    <property type="nucleotide sequence ID" value="XM_002494279.1"/>
</dbReference>
<dbReference type="FunCoup" id="C4R970">
    <property type="interactions" value="52"/>
</dbReference>
<dbReference type="STRING" id="644223.C4R970"/>
<dbReference type="EnsemblFungi" id="CAY72145">
    <property type="protein sequence ID" value="CAY72145"/>
    <property type="gene ID" value="PAS_chr4_0875"/>
</dbReference>
<dbReference type="GeneID" id="8201273"/>
<dbReference type="KEGG" id="ppa:PAS_chr4_0875"/>
<dbReference type="eggNOG" id="KOG0322">
    <property type="taxonomic scope" value="Eukaryota"/>
</dbReference>
<dbReference type="HOGENOM" id="CLU_045414_0_0_1"/>
<dbReference type="InParanoid" id="C4R970"/>
<dbReference type="OMA" id="WHNSENG"/>
<dbReference type="OrthoDB" id="7668193at2759"/>
<dbReference type="Proteomes" id="UP000000314">
    <property type="component" value="Chromosome 4"/>
</dbReference>
<dbReference type="GO" id="GO:0005634">
    <property type="term" value="C:nucleus"/>
    <property type="evidence" value="ECO:0007669"/>
    <property type="project" value="UniProtKB-SubCell"/>
</dbReference>
<dbReference type="GO" id="GO:0006325">
    <property type="term" value="P:chromatin organization"/>
    <property type="evidence" value="ECO:0007669"/>
    <property type="project" value="UniProtKB-KW"/>
</dbReference>
<dbReference type="Gene3D" id="2.130.10.10">
    <property type="entry name" value="YVTN repeat-like/Quinoprotein amine dehydrogenase"/>
    <property type="match status" value="2"/>
</dbReference>
<dbReference type="InterPro" id="IPR015943">
    <property type="entry name" value="WD40/YVTN_repeat-like_dom_sf"/>
</dbReference>
<dbReference type="InterPro" id="IPR036322">
    <property type="entry name" value="WD40_repeat_dom_sf"/>
</dbReference>
<dbReference type="PANTHER" id="PTHR19854:SF1">
    <property type="entry name" value="GUANINE NUCLEOTIDE-BINDING PROTEIN SUBUNIT BETA-LIKE PROTEIN 1"/>
    <property type="match status" value="1"/>
</dbReference>
<dbReference type="PANTHER" id="PTHR19854">
    <property type="entry name" value="TRANSDUCIN BETA-LIKE 3"/>
    <property type="match status" value="1"/>
</dbReference>
<dbReference type="SUPFAM" id="SSF50978">
    <property type="entry name" value="WD40 repeat-like"/>
    <property type="match status" value="1"/>
</dbReference>
<evidence type="ECO:0000250" key="1"/>
<evidence type="ECO:0000305" key="2"/>
<name>ASA1_KOMPG</name>